<evidence type="ECO:0000255" key="1">
    <source>
        <dbReference type="HAMAP-Rule" id="MF_01852"/>
    </source>
</evidence>
<proteinExistence type="inferred from homology"/>
<organism>
    <name type="scientific">Xylella fastidiosa (strain Temecula1 / ATCC 700964)</name>
    <dbReference type="NCBI Taxonomy" id="183190"/>
    <lineage>
        <taxon>Bacteria</taxon>
        <taxon>Pseudomonadati</taxon>
        <taxon>Pseudomonadota</taxon>
        <taxon>Gammaproteobacteria</taxon>
        <taxon>Lysobacterales</taxon>
        <taxon>Lysobacteraceae</taxon>
        <taxon>Xylella</taxon>
    </lineage>
</organism>
<reference key="1">
    <citation type="journal article" date="2003" name="J. Bacteriol.">
        <title>Comparative analyses of the complete genome sequences of Pierce's disease and citrus variegated chlorosis strains of Xylella fastidiosa.</title>
        <authorList>
            <person name="Van Sluys M.A."/>
            <person name="de Oliveira M.C."/>
            <person name="Monteiro-Vitorello C.B."/>
            <person name="Miyaki C.Y."/>
            <person name="Furlan L.R."/>
            <person name="Camargo L.E.A."/>
            <person name="da Silva A.C.R."/>
            <person name="Moon D.H."/>
            <person name="Takita M.A."/>
            <person name="Lemos E.G.M."/>
            <person name="Machado M.A."/>
            <person name="Ferro M.I.T."/>
            <person name="da Silva F.R."/>
            <person name="Goldman M.H.S."/>
            <person name="Goldman G.H."/>
            <person name="Lemos M.V.F."/>
            <person name="El-Dorry H."/>
            <person name="Tsai S.M."/>
            <person name="Carrer H."/>
            <person name="Carraro D.M."/>
            <person name="de Oliveira R.C."/>
            <person name="Nunes L.R."/>
            <person name="Siqueira W.J."/>
            <person name="Coutinho L.L."/>
            <person name="Kimura E.T."/>
            <person name="Ferro E.S."/>
            <person name="Harakava R."/>
            <person name="Kuramae E.E."/>
            <person name="Marino C.L."/>
            <person name="Giglioti E."/>
            <person name="Abreu I.L."/>
            <person name="Alves L.M.C."/>
            <person name="do Amaral A.M."/>
            <person name="Baia G.S."/>
            <person name="Blanco S.R."/>
            <person name="Brito M.S."/>
            <person name="Cannavan F.S."/>
            <person name="Celestino A.V."/>
            <person name="da Cunha A.F."/>
            <person name="Fenille R.C."/>
            <person name="Ferro J.A."/>
            <person name="Formighieri E.F."/>
            <person name="Kishi L.T."/>
            <person name="Leoni S.G."/>
            <person name="Oliveira A.R."/>
            <person name="Rosa V.E. Jr."/>
            <person name="Sassaki F.T."/>
            <person name="Sena J.A.D."/>
            <person name="de Souza A.A."/>
            <person name="Truffi D."/>
            <person name="Tsukumo F."/>
            <person name="Yanai G.M."/>
            <person name="Zaros L.G."/>
            <person name="Civerolo E.L."/>
            <person name="Simpson A.J.G."/>
            <person name="Almeida N.F. Jr."/>
            <person name="Setubal J.C."/>
            <person name="Kitajima J.P."/>
        </authorList>
    </citation>
    <scope>NUCLEOTIDE SEQUENCE [LARGE SCALE GENOMIC DNA]</scope>
    <source>
        <strain>Temecula1 / ATCC 700964</strain>
    </source>
</reference>
<gene>
    <name evidence="1" type="primary">tsaC</name>
    <name type="synonym">rimN</name>
    <name type="ordered locus">PD_1768</name>
</gene>
<feature type="chain" id="PRO_0000353020" description="Threonylcarbamoyl-AMP synthase">
    <location>
        <begin position="1"/>
        <end position="187"/>
    </location>
</feature>
<feature type="domain" description="YrdC-like" evidence="1">
    <location>
        <begin position="4"/>
        <end position="187"/>
    </location>
</feature>
<sequence length="187" mass="20103">MATTLTLSEAVTALQQGDVIAYPTEAVWGLGCDPRQETAVHTLLNIKQRASGKGLILVTAELNTLQDWLDLDTLSPERLHEVQASWPGPHTWVLPASTRAPHWITGHHNGLAVRISAHPLVSALCRAWNMALISTSANVAGQPPARRREDLDPSLLPHLAGIVDGPTGGLAQPTSIRDARSGHILRL</sequence>
<protein>
    <recommendedName>
        <fullName evidence="1">Threonylcarbamoyl-AMP synthase</fullName>
        <shortName evidence="1">TC-AMP synthase</shortName>
        <ecNumber evidence="1">2.7.7.87</ecNumber>
    </recommendedName>
    <alternativeName>
        <fullName evidence="1">L-threonylcarbamoyladenylate synthase</fullName>
    </alternativeName>
    <alternativeName>
        <fullName evidence="1">t(6)A37 threonylcarbamoyladenosine biosynthesis protein TsaC</fullName>
    </alternativeName>
    <alternativeName>
        <fullName evidence="1">tRNA threonylcarbamoyladenosine biosynthesis protein TsaC</fullName>
    </alternativeName>
</protein>
<name>TSAC_XYLFT</name>
<keyword id="KW-0067">ATP-binding</keyword>
<keyword id="KW-0963">Cytoplasm</keyword>
<keyword id="KW-0547">Nucleotide-binding</keyword>
<keyword id="KW-0548">Nucleotidyltransferase</keyword>
<keyword id="KW-1185">Reference proteome</keyword>
<keyword id="KW-0808">Transferase</keyword>
<keyword id="KW-0819">tRNA processing</keyword>
<accession>Q87AQ5</accession>
<dbReference type="EC" id="2.7.7.87" evidence="1"/>
<dbReference type="EMBL" id="AE009442">
    <property type="protein sequence ID" value="AAO29602.1"/>
    <property type="molecule type" value="Genomic_DNA"/>
</dbReference>
<dbReference type="RefSeq" id="WP_011098240.1">
    <property type="nucleotide sequence ID" value="NC_004556.1"/>
</dbReference>
<dbReference type="SMR" id="Q87AQ5"/>
<dbReference type="KEGG" id="xft:PD_1768"/>
<dbReference type="HOGENOM" id="CLU_031397_6_0_6"/>
<dbReference type="Proteomes" id="UP000002516">
    <property type="component" value="Chromosome"/>
</dbReference>
<dbReference type="GO" id="GO:0005737">
    <property type="term" value="C:cytoplasm"/>
    <property type="evidence" value="ECO:0007669"/>
    <property type="project" value="UniProtKB-SubCell"/>
</dbReference>
<dbReference type="GO" id="GO:0005524">
    <property type="term" value="F:ATP binding"/>
    <property type="evidence" value="ECO:0007669"/>
    <property type="project" value="UniProtKB-UniRule"/>
</dbReference>
<dbReference type="GO" id="GO:0003725">
    <property type="term" value="F:double-stranded RNA binding"/>
    <property type="evidence" value="ECO:0007669"/>
    <property type="project" value="InterPro"/>
</dbReference>
<dbReference type="GO" id="GO:0061710">
    <property type="term" value="F:L-threonylcarbamoyladenylate synthase"/>
    <property type="evidence" value="ECO:0007669"/>
    <property type="project" value="UniProtKB-EC"/>
</dbReference>
<dbReference type="GO" id="GO:0000049">
    <property type="term" value="F:tRNA binding"/>
    <property type="evidence" value="ECO:0007669"/>
    <property type="project" value="TreeGrafter"/>
</dbReference>
<dbReference type="GO" id="GO:0006450">
    <property type="term" value="P:regulation of translational fidelity"/>
    <property type="evidence" value="ECO:0007669"/>
    <property type="project" value="TreeGrafter"/>
</dbReference>
<dbReference type="GO" id="GO:0002949">
    <property type="term" value="P:tRNA threonylcarbamoyladenosine modification"/>
    <property type="evidence" value="ECO:0007669"/>
    <property type="project" value="UniProtKB-UniRule"/>
</dbReference>
<dbReference type="FunFam" id="3.90.870.10:FF:000004">
    <property type="entry name" value="Threonylcarbamoyl-AMP synthase"/>
    <property type="match status" value="1"/>
</dbReference>
<dbReference type="Gene3D" id="3.90.870.10">
    <property type="entry name" value="DHBP synthase"/>
    <property type="match status" value="1"/>
</dbReference>
<dbReference type="HAMAP" id="MF_01852">
    <property type="entry name" value="TsaC"/>
    <property type="match status" value="1"/>
</dbReference>
<dbReference type="InterPro" id="IPR017945">
    <property type="entry name" value="DHBP_synth_RibB-like_a/b_dom"/>
</dbReference>
<dbReference type="InterPro" id="IPR006070">
    <property type="entry name" value="Sua5-like_dom"/>
</dbReference>
<dbReference type="InterPro" id="IPR023535">
    <property type="entry name" value="TC-AMP_synthase"/>
</dbReference>
<dbReference type="InterPro" id="IPR050156">
    <property type="entry name" value="TC-AMP_synthase_SUA5"/>
</dbReference>
<dbReference type="PANTHER" id="PTHR17490">
    <property type="entry name" value="SUA5"/>
    <property type="match status" value="1"/>
</dbReference>
<dbReference type="PANTHER" id="PTHR17490:SF18">
    <property type="entry name" value="THREONYLCARBAMOYL-AMP SYNTHASE"/>
    <property type="match status" value="1"/>
</dbReference>
<dbReference type="Pfam" id="PF01300">
    <property type="entry name" value="Sua5_yciO_yrdC"/>
    <property type="match status" value="1"/>
</dbReference>
<dbReference type="SUPFAM" id="SSF55821">
    <property type="entry name" value="YrdC/RibB"/>
    <property type="match status" value="1"/>
</dbReference>
<dbReference type="PROSITE" id="PS51163">
    <property type="entry name" value="YRDC"/>
    <property type="match status" value="1"/>
</dbReference>
<comment type="function">
    <text evidence="1">Required for the formation of a threonylcarbamoyl group on adenosine at position 37 (t(6)A37) in tRNAs that read codons beginning with adenine. Catalyzes the conversion of L-threonine, HCO(3)(-)/CO(2) and ATP to give threonylcarbamoyl-AMP (TC-AMP) as the acyladenylate intermediate, with the release of diphosphate.</text>
</comment>
<comment type="catalytic activity">
    <reaction evidence="1">
        <text>L-threonine + hydrogencarbonate + ATP = L-threonylcarbamoyladenylate + diphosphate + H2O</text>
        <dbReference type="Rhea" id="RHEA:36407"/>
        <dbReference type="ChEBI" id="CHEBI:15377"/>
        <dbReference type="ChEBI" id="CHEBI:17544"/>
        <dbReference type="ChEBI" id="CHEBI:30616"/>
        <dbReference type="ChEBI" id="CHEBI:33019"/>
        <dbReference type="ChEBI" id="CHEBI:57926"/>
        <dbReference type="ChEBI" id="CHEBI:73682"/>
        <dbReference type="EC" id="2.7.7.87"/>
    </reaction>
</comment>
<comment type="subcellular location">
    <subcellularLocation>
        <location evidence="1">Cytoplasm</location>
    </subcellularLocation>
</comment>
<comment type="similarity">
    <text evidence="1">Belongs to the SUA5 family. TsaC subfamily.</text>
</comment>